<dbReference type="EMBL" id="AM410108">
    <property type="protein sequence ID" value="CAL68923.1"/>
    <property type="molecule type" value="Genomic_DNA"/>
</dbReference>
<dbReference type="SMR" id="A4H203"/>
<dbReference type="GO" id="GO:0005576">
    <property type="term" value="C:extracellular region"/>
    <property type="evidence" value="ECO:0007669"/>
    <property type="project" value="UniProtKB-SubCell"/>
</dbReference>
<dbReference type="GO" id="GO:0042742">
    <property type="term" value="P:defense response to bacterium"/>
    <property type="evidence" value="ECO:0007669"/>
    <property type="project" value="UniProtKB-KW"/>
</dbReference>
<dbReference type="GO" id="GO:0045087">
    <property type="term" value="P:innate immune response"/>
    <property type="evidence" value="ECO:0007669"/>
    <property type="project" value="InterPro"/>
</dbReference>
<dbReference type="InterPro" id="IPR025933">
    <property type="entry name" value="Beta_defensin_dom"/>
</dbReference>
<dbReference type="Pfam" id="PF13841">
    <property type="entry name" value="Defensin_beta_2"/>
    <property type="match status" value="1"/>
</dbReference>
<reference key="1">
    <citation type="submission" date="2006-11" db="EMBL/GenBank/DDBJ databases">
        <title>Evolution and sequence variation of human beta-defensin genes.</title>
        <authorList>
            <person name="Hollox E.J."/>
            <person name="Armour J.A.L."/>
        </authorList>
    </citation>
    <scope>NUCLEOTIDE SEQUENCE [GENOMIC DNA]</scope>
</reference>
<feature type="signal peptide" evidence="2">
    <location>
        <begin position="1"/>
        <end position="22"/>
    </location>
</feature>
<feature type="peptide" id="PRO_0000289810" description="Beta-defensin 104A">
    <location>
        <begin position="23"/>
        <end position="72"/>
    </location>
</feature>
<feature type="disulfide bond" evidence="1">
    <location>
        <begin position="30"/>
        <end position="57"/>
    </location>
</feature>
<feature type="disulfide bond" evidence="1">
    <location>
        <begin position="37"/>
        <end position="51"/>
    </location>
</feature>
<feature type="disulfide bond" evidence="1">
    <location>
        <begin position="41"/>
        <end position="58"/>
    </location>
</feature>
<protein>
    <recommendedName>
        <fullName>Beta-defensin 104A</fullName>
    </recommendedName>
    <alternativeName>
        <fullName>Defensin, beta 104</fullName>
    </alternativeName>
    <alternativeName>
        <fullName>Defensin, beta 104A</fullName>
    </alternativeName>
</protein>
<sequence>MRRLVLLLAISLLLYQDLPVRSEFELDRICGYGTARCRKKCRSQEYRIGRCPNTYACCLRKWDESLLNRTKP</sequence>
<organism>
    <name type="scientific">Pongo pygmaeus</name>
    <name type="common">Bornean orangutan</name>
    <dbReference type="NCBI Taxonomy" id="9600"/>
    <lineage>
        <taxon>Eukaryota</taxon>
        <taxon>Metazoa</taxon>
        <taxon>Chordata</taxon>
        <taxon>Craniata</taxon>
        <taxon>Vertebrata</taxon>
        <taxon>Euteleostomi</taxon>
        <taxon>Mammalia</taxon>
        <taxon>Eutheria</taxon>
        <taxon>Euarchontoglires</taxon>
        <taxon>Primates</taxon>
        <taxon>Haplorrhini</taxon>
        <taxon>Catarrhini</taxon>
        <taxon>Hominidae</taxon>
        <taxon>Pongo</taxon>
    </lineage>
</organism>
<evidence type="ECO:0000250" key="1"/>
<evidence type="ECO:0000255" key="2"/>
<evidence type="ECO:0000305" key="3"/>
<name>D104A_PONPY</name>
<accession>A4H203</accession>
<gene>
    <name type="primary">DEFB104A</name>
    <name type="synonym">DEFB104</name>
</gene>
<proteinExistence type="inferred from homology"/>
<keyword id="KW-0044">Antibiotic</keyword>
<keyword id="KW-0929">Antimicrobial</keyword>
<keyword id="KW-0211">Defensin</keyword>
<keyword id="KW-1015">Disulfide bond</keyword>
<keyword id="KW-0964">Secreted</keyword>
<keyword id="KW-0732">Signal</keyword>
<comment type="function">
    <text evidence="1">Has antimicrobial activity.</text>
</comment>
<comment type="subcellular location">
    <subcellularLocation>
        <location evidence="1">Secreted</location>
    </subcellularLocation>
</comment>
<comment type="similarity">
    <text evidence="3">Belongs to the beta-defensin family.</text>
</comment>